<keyword id="KW-1185">Reference proteome</keyword>
<keyword id="KW-0677">Repeat</keyword>
<name>Y1819_SYNY3</name>
<organism>
    <name type="scientific">Synechocystis sp. (strain ATCC 27184 / PCC 6803 / Kazusa)</name>
    <dbReference type="NCBI Taxonomy" id="1111708"/>
    <lineage>
        <taxon>Bacteria</taxon>
        <taxon>Bacillati</taxon>
        <taxon>Cyanobacteriota</taxon>
        <taxon>Cyanophyceae</taxon>
        <taxon>Synechococcales</taxon>
        <taxon>Merismopediaceae</taxon>
        <taxon>Synechocystis</taxon>
    </lineage>
</organism>
<sequence length="331" mass="35315">MEAKELVQRYRNGETLFTGLKLPGINLEAADLIGIVLNEADLRGANLLFCYLNRANLGQANLVAANLSGASLNQADLAGADLRSANFHGAMLQGAILRDSDMTLATLQDTNLIGADLRGADLSGATLTGACLRGANMRQEKKGYYTNLQAAILGRADLQGANMKGVDLSRADLSYANLKEANLRDVDLRKADLSYANLKGALLTDANLSGAKLNGADLQNANLMRAKISEAEMTAVNCQGAIMTHVNLNRTNLTGSNLSFTRMNSADLSRANLTKANLQEAELIEAFFARANLTEANFINANLVRADLMSANMVGADFQGATMPDGQVRHH</sequence>
<feature type="chain" id="PRO_0000217682" description="Uncharacterized protein slr1819">
    <location>
        <begin position="1"/>
        <end position="331"/>
    </location>
</feature>
<feature type="domain" description="Pentapeptide repeat 1">
    <location>
        <begin position="20"/>
        <end position="59"/>
    </location>
</feature>
<feature type="domain" description="Pentapeptide repeat 2">
    <location>
        <begin position="60"/>
        <end position="99"/>
    </location>
</feature>
<feature type="domain" description="Pentapeptide repeat 3">
    <location>
        <begin position="100"/>
        <end position="139"/>
    </location>
</feature>
<feature type="domain" description="Pentapeptide repeat 4">
    <location>
        <begin position="151"/>
        <end position="190"/>
    </location>
</feature>
<feature type="domain" description="Pentapeptide repeat 5">
    <location>
        <begin position="191"/>
        <end position="230"/>
    </location>
</feature>
<feature type="domain" description="Pentapeptide repeat 6">
    <location>
        <begin position="231"/>
        <end position="270"/>
    </location>
</feature>
<feature type="domain" description="Pentapeptide repeat 7">
    <location>
        <begin position="271"/>
        <end position="310"/>
    </location>
</feature>
<reference key="1">
    <citation type="journal article" date="1996" name="DNA Res.">
        <title>Sequence analysis of the genome of the unicellular cyanobacterium Synechocystis sp. strain PCC6803. II. Sequence determination of the entire genome and assignment of potential protein-coding regions.</title>
        <authorList>
            <person name="Kaneko T."/>
            <person name="Sato S."/>
            <person name="Kotani H."/>
            <person name="Tanaka A."/>
            <person name="Asamizu E."/>
            <person name="Nakamura Y."/>
            <person name="Miyajima N."/>
            <person name="Hirosawa M."/>
            <person name="Sugiura M."/>
            <person name="Sasamoto S."/>
            <person name="Kimura T."/>
            <person name="Hosouchi T."/>
            <person name="Matsuno A."/>
            <person name="Muraki A."/>
            <person name="Nakazaki N."/>
            <person name="Naruo K."/>
            <person name="Okumura S."/>
            <person name="Shimpo S."/>
            <person name="Takeuchi C."/>
            <person name="Wada T."/>
            <person name="Watanabe A."/>
            <person name="Yamada M."/>
            <person name="Yasuda M."/>
            <person name="Tabata S."/>
        </authorList>
    </citation>
    <scope>NUCLEOTIDE SEQUENCE [LARGE SCALE GENOMIC DNA]</scope>
    <source>
        <strain>ATCC 27184 / PCC 6803 / Kazusa</strain>
    </source>
</reference>
<accession>P73709</accession>
<proteinExistence type="predicted"/>
<protein>
    <recommendedName>
        <fullName>Uncharacterized protein slr1819</fullName>
    </recommendedName>
</protein>
<dbReference type="EMBL" id="BA000022">
    <property type="protein sequence ID" value="BAA17756.1"/>
    <property type="molecule type" value="Genomic_DNA"/>
</dbReference>
<dbReference type="PIR" id="S77198">
    <property type="entry name" value="S77198"/>
</dbReference>
<dbReference type="SMR" id="P73709"/>
<dbReference type="IntAct" id="P73709">
    <property type="interactions" value="1"/>
</dbReference>
<dbReference type="STRING" id="1148.gene:10498623"/>
<dbReference type="PaxDb" id="1148-1652837"/>
<dbReference type="EnsemblBacteria" id="BAA17756">
    <property type="protein sequence ID" value="BAA17756"/>
    <property type="gene ID" value="BAA17756"/>
</dbReference>
<dbReference type="KEGG" id="syn:slr1819"/>
<dbReference type="eggNOG" id="COG1357">
    <property type="taxonomic scope" value="Bacteria"/>
</dbReference>
<dbReference type="InParanoid" id="P73709"/>
<dbReference type="PhylomeDB" id="P73709"/>
<dbReference type="Proteomes" id="UP000001425">
    <property type="component" value="Chromosome"/>
</dbReference>
<dbReference type="Gene3D" id="2.160.20.80">
    <property type="entry name" value="E3 ubiquitin-protein ligase SopA"/>
    <property type="match status" value="2"/>
</dbReference>
<dbReference type="InterPro" id="IPR001646">
    <property type="entry name" value="5peptide_repeat"/>
</dbReference>
<dbReference type="PANTHER" id="PTHR47485">
    <property type="entry name" value="THYLAKOID LUMENAL 17.4 KDA PROTEIN, CHLOROPLASTIC"/>
    <property type="match status" value="1"/>
</dbReference>
<dbReference type="PANTHER" id="PTHR47485:SF1">
    <property type="entry name" value="THYLAKOID LUMENAL 17.4 KDA PROTEIN, CHLOROPLASTIC"/>
    <property type="match status" value="1"/>
</dbReference>
<dbReference type="Pfam" id="PF00805">
    <property type="entry name" value="Pentapeptide"/>
    <property type="match status" value="6"/>
</dbReference>
<dbReference type="SUPFAM" id="SSF141571">
    <property type="entry name" value="Pentapeptide repeat-like"/>
    <property type="match status" value="3"/>
</dbReference>
<gene>
    <name type="ordered locus">slr1819</name>
</gene>